<sequence>MLSATKQTFRSLQIRTMSTNTKHYDYLVIGGGSGGVASARRAASYGAKTLLVEAKALGGTCVNVGCVPKKVMWYASDLATRVSHANEYGLYQNLPLDKEHLTFNWPEFKQKRDAYVHRLNGIYQKNLEKEKVDVVFGWARFNKDGNVEVQKRDNTTEVYSANHILVATGGKAIFPENIPGFELGTDSDGFFRLEEQPKKVVVVGAGYIGIELAGVFHGLGSETHLVIRGETVLRKFDECIQNTITDHYVKEGINVHKLSKIVKVEKNVETDKLKIHMNDSKSIDDVDELIWTIGRKSHLGMGSENVGIKLNSHDQIIADEYQNTNVPNIYSLGDVVGKVELTPVAIAAGRKLSNRLFGPEKFRNDKLDYENVPSVIFSHPEAGSIGISEKEAIEKYGKENIKVYNSKFTAMYYAMLSEKSPTRYKIVCAGPNEKVVGLHIVGDSSAEILQGFGVAIKMGATKADFDNCVAIHPTSAEELVTMR</sequence>
<organism>
    <name type="scientific">Saccharomyces cerevisiae (strain ATCC 204508 / S288c)</name>
    <name type="common">Baker's yeast</name>
    <dbReference type="NCBI Taxonomy" id="559292"/>
    <lineage>
        <taxon>Eukaryota</taxon>
        <taxon>Fungi</taxon>
        <taxon>Dikarya</taxon>
        <taxon>Ascomycota</taxon>
        <taxon>Saccharomycotina</taxon>
        <taxon>Saccharomycetes</taxon>
        <taxon>Saccharomycetales</taxon>
        <taxon>Saccharomycetaceae</taxon>
        <taxon>Saccharomyces</taxon>
    </lineage>
</organism>
<comment type="function">
    <text evidence="7 8 11">Catalyzes the reduction of glutathione disulfide (GSSG) to reduced glutathione (GSH). Constitutes the major mechanism to maintain a high GSH:GSSG ratio in the cytosol.</text>
</comment>
<comment type="catalytic activity">
    <reaction evidence="7 11">
        <text>2 glutathione + NADP(+) = glutathione disulfide + NADPH + H(+)</text>
        <dbReference type="Rhea" id="RHEA:11740"/>
        <dbReference type="ChEBI" id="CHEBI:15378"/>
        <dbReference type="ChEBI" id="CHEBI:57783"/>
        <dbReference type="ChEBI" id="CHEBI:57925"/>
        <dbReference type="ChEBI" id="CHEBI:58297"/>
        <dbReference type="ChEBI" id="CHEBI:58349"/>
        <dbReference type="EC" id="1.8.1.7"/>
    </reaction>
</comment>
<comment type="cofactor">
    <cofactor evidence="6">
        <name>FAD</name>
        <dbReference type="ChEBI" id="CHEBI:57692"/>
    </cofactor>
    <text evidence="6">Binds 1 FAD per subunit.</text>
</comment>
<comment type="subunit">
    <text evidence="6">Homodimer.</text>
</comment>
<comment type="subcellular location">
    <subcellularLocation>
        <location evidence="3 9">Cytoplasm</location>
    </subcellularLocation>
    <subcellularLocation>
        <location evidence="3 9">Nucleus</location>
    </subcellularLocation>
    <subcellularLocation>
        <location evidence="3 5">Mitochondrion</location>
    </subcellularLocation>
    <subcellularLocation>
        <location evidence="10">Peroxisome</location>
    </subcellularLocation>
</comment>
<comment type="alternative products">
    <event type="alternative initiation"/>
    <isoform>
        <id>P41921-1</id>
        <name>1</name>
        <sequence type="displayed"/>
    </isoform>
    <isoform>
        <id>P41921-2</id>
        <name>2</name>
        <sequence type="described" ref="VSP_058124"/>
    </isoform>
</comment>
<comment type="disruption phenotype">
    <text evidence="11">Impairs glutathione reductase activity.</text>
</comment>
<comment type="miscellaneous">
    <text evidence="6">The active site is a redox-active disulfide bond.</text>
</comment>
<comment type="miscellaneous">
    <text evidence="4">Present with 7600 molecules/cell in log phase SD medium.</text>
</comment>
<comment type="similarity">
    <text evidence="13">Belongs to the class-I pyridine nucleotide-disulfide oxidoreductase family.</text>
</comment>
<dbReference type="EC" id="1.8.1.7" evidence="7 11"/>
<dbReference type="EMBL" id="L35342">
    <property type="protein sequence ID" value="AAA92575.1"/>
    <property type="molecule type" value="Genomic_DNA"/>
</dbReference>
<dbReference type="EMBL" id="U43281">
    <property type="protein sequence ID" value="AAB68208.1"/>
    <property type="molecule type" value="Genomic_DNA"/>
</dbReference>
<dbReference type="EMBL" id="D37871">
    <property type="protein sequence ID" value="BAA07109.1"/>
    <property type="molecule type" value="mRNA"/>
</dbReference>
<dbReference type="EMBL" id="BK006949">
    <property type="protein sequence ID" value="DAA11342.1"/>
    <property type="molecule type" value="Genomic_DNA"/>
</dbReference>
<dbReference type="PIR" id="S61975">
    <property type="entry name" value="S61975"/>
</dbReference>
<dbReference type="RefSeq" id="NP_015234.1">
    <molecule id="P41921-1"/>
    <property type="nucleotide sequence ID" value="NM_001183905.1"/>
</dbReference>
<dbReference type="PDB" id="2HQM">
    <property type="method" value="X-ray"/>
    <property type="resolution" value="2.40 A"/>
    <property type="chains" value="A/B=17-483"/>
</dbReference>
<dbReference type="PDBsum" id="2HQM"/>
<dbReference type="SMR" id="P41921"/>
<dbReference type="BioGRID" id="36090">
    <property type="interactions" value="105"/>
</dbReference>
<dbReference type="DIP" id="DIP-4020N"/>
<dbReference type="FunCoup" id="P41921">
    <property type="interactions" value="1362"/>
</dbReference>
<dbReference type="IntAct" id="P41921">
    <property type="interactions" value="5"/>
</dbReference>
<dbReference type="MINT" id="P41921"/>
<dbReference type="STRING" id="4932.YPL091W"/>
<dbReference type="BindingDB" id="P41921"/>
<dbReference type="ChEMBL" id="CHEMBL4119"/>
<dbReference type="DrugCentral" id="P41921"/>
<dbReference type="GlyCosmos" id="P41921">
    <property type="glycosylation" value="1 site, No reported glycans"/>
</dbReference>
<dbReference type="GlyGen" id="P41921">
    <property type="glycosylation" value="1 site"/>
</dbReference>
<dbReference type="iPTMnet" id="P41921"/>
<dbReference type="PaxDb" id="4932-YPL091W"/>
<dbReference type="PeptideAtlas" id="P41921"/>
<dbReference type="EnsemblFungi" id="YPL091W_mRNA">
    <molecule id="P41921-1"/>
    <property type="protein sequence ID" value="YPL091W"/>
    <property type="gene ID" value="YPL091W"/>
</dbReference>
<dbReference type="GeneID" id="856014"/>
<dbReference type="KEGG" id="sce:YPL091W"/>
<dbReference type="AGR" id="SGD:S000006012"/>
<dbReference type="SGD" id="S000006012">
    <property type="gene designation" value="GLR1"/>
</dbReference>
<dbReference type="VEuPathDB" id="FungiDB:YPL091W"/>
<dbReference type="eggNOG" id="KOG0405">
    <property type="taxonomic scope" value="Eukaryota"/>
</dbReference>
<dbReference type="GeneTree" id="ENSGT00940000156986"/>
<dbReference type="HOGENOM" id="CLU_016755_2_2_1"/>
<dbReference type="InParanoid" id="P41921"/>
<dbReference type="OMA" id="MSKHYDY"/>
<dbReference type="OrthoDB" id="5956163at2759"/>
<dbReference type="BioCyc" id="YEAST:YPL091W-MONOMER"/>
<dbReference type="BRENDA" id="1.8.1.7">
    <property type="organism ID" value="984"/>
</dbReference>
<dbReference type="Reactome" id="R-SCE-3299685">
    <property type="pathway name" value="Detoxification of Reactive Oxygen Species"/>
</dbReference>
<dbReference type="Reactome" id="R-SCE-499943">
    <property type="pathway name" value="Interconversion of nucleotide di- and triphosphates"/>
</dbReference>
<dbReference type="Reactome" id="R-SCE-5628897">
    <property type="pathway name" value="TP53 Regulates Metabolic Genes"/>
</dbReference>
<dbReference type="BioGRID-ORCS" id="856014">
    <property type="hits" value="0 hits in 10 CRISPR screens"/>
</dbReference>
<dbReference type="EvolutionaryTrace" id="P41921"/>
<dbReference type="PRO" id="PR:P41921"/>
<dbReference type="Proteomes" id="UP000002311">
    <property type="component" value="Chromosome XVI"/>
</dbReference>
<dbReference type="RNAct" id="P41921">
    <property type="molecule type" value="protein"/>
</dbReference>
<dbReference type="GO" id="GO:0005737">
    <property type="term" value="C:cytoplasm"/>
    <property type="evidence" value="ECO:0007005"/>
    <property type="project" value="SGD"/>
</dbReference>
<dbReference type="GO" id="GO:0005829">
    <property type="term" value="C:cytosol"/>
    <property type="evidence" value="ECO:0000314"/>
    <property type="project" value="SGD"/>
</dbReference>
<dbReference type="GO" id="GO:0005739">
    <property type="term" value="C:mitochondrion"/>
    <property type="evidence" value="ECO:0007005"/>
    <property type="project" value="SGD"/>
</dbReference>
<dbReference type="GO" id="GO:0005634">
    <property type="term" value="C:nucleus"/>
    <property type="evidence" value="ECO:0000314"/>
    <property type="project" value="SGD"/>
</dbReference>
<dbReference type="GO" id="GO:0005777">
    <property type="term" value="C:peroxisome"/>
    <property type="evidence" value="ECO:0000314"/>
    <property type="project" value="SGD"/>
</dbReference>
<dbReference type="GO" id="GO:0050660">
    <property type="term" value="F:flavin adenine dinucleotide binding"/>
    <property type="evidence" value="ECO:0000318"/>
    <property type="project" value="GO_Central"/>
</dbReference>
<dbReference type="GO" id="GO:0004362">
    <property type="term" value="F:glutathione-disulfide reductase (NADPH) activity"/>
    <property type="evidence" value="ECO:0000314"/>
    <property type="project" value="SGD"/>
</dbReference>
<dbReference type="GO" id="GO:0050661">
    <property type="term" value="F:NADP binding"/>
    <property type="evidence" value="ECO:0007669"/>
    <property type="project" value="InterPro"/>
</dbReference>
<dbReference type="GO" id="GO:0045454">
    <property type="term" value="P:cell redox homeostasis"/>
    <property type="evidence" value="ECO:0000315"/>
    <property type="project" value="SGD"/>
</dbReference>
<dbReference type="GO" id="GO:0034599">
    <property type="term" value="P:cellular response to oxidative stress"/>
    <property type="evidence" value="ECO:0000315"/>
    <property type="project" value="SGD"/>
</dbReference>
<dbReference type="GO" id="GO:0006749">
    <property type="term" value="P:glutathione metabolic process"/>
    <property type="evidence" value="ECO:0000315"/>
    <property type="project" value="SGD"/>
</dbReference>
<dbReference type="FunFam" id="3.30.390.30:FF:000003">
    <property type="entry name" value="Glutathione reductase"/>
    <property type="match status" value="1"/>
</dbReference>
<dbReference type="FunFam" id="3.50.50.60:FF:000235">
    <property type="entry name" value="Glutathione reductase"/>
    <property type="match status" value="1"/>
</dbReference>
<dbReference type="Gene3D" id="3.30.390.30">
    <property type="match status" value="1"/>
</dbReference>
<dbReference type="Gene3D" id="3.50.50.60">
    <property type="entry name" value="FAD/NAD(P)-binding domain"/>
    <property type="match status" value="2"/>
</dbReference>
<dbReference type="InterPro" id="IPR036188">
    <property type="entry name" value="FAD/NAD-bd_sf"/>
</dbReference>
<dbReference type="InterPro" id="IPR023753">
    <property type="entry name" value="FAD/NAD-binding_dom"/>
</dbReference>
<dbReference type="InterPro" id="IPR016156">
    <property type="entry name" value="FAD/NAD-linked_Rdtase_dimer_sf"/>
</dbReference>
<dbReference type="InterPro" id="IPR006322">
    <property type="entry name" value="Glutathione_Rdtase_euk/bac"/>
</dbReference>
<dbReference type="InterPro" id="IPR046952">
    <property type="entry name" value="GSHR/TRXR-like"/>
</dbReference>
<dbReference type="InterPro" id="IPR001100">
    <property type="entry name" value="Pyr_nuc-diS_OxRdtase"/>
</dbReference>
<dbReference type="InterPro" id="IPR004099">
    <property type="entry name" value="Pyr_nucl-diS_OxRdtase_dimer"/>
</dbReference>
<dbReference type="InterPro" id="IPR012999">
    <property type="entry name" value="Pyr_OxRdtase_I_AS"/>
</dbReference>
<dbReference type="NCBIfam" id="TIGR01421">
    <property type="entry name" value="gluta_reduc_1"/>
    <property type="match status" value="1"/>
</dbReference>
<dbReference type="NCBIfam" id="NF004776">
    <property type="entry name" value="PRK06116.1"/>
    <property type="match status" value="1"/>
</dbReference>
<dbReference type="PANTHER" id="PTHR42737">
    <property type="entry name" value="GLUTATHIONE REDUCTASE"/>
    <property type="match status" value="1"/>
</dbReference>
<dbReference type="PANTHER" id="PTHR42737:SF2">
    <property type="entry name" value="GLUTATHIONE REDUCTASE"/>
    <property type="match status" value="1"/>
</dbReference>
<dbReference type="Pfam" id="PF07992">
    <property type="entry name" value="Pyr_redox_2"/>
    <property type="match status" value="1"/>
</dbReference>
<dbReference type="Pfam" id="PF02852">
    <property type="entry name" value="Pyr_redox_dim"/>
    <property type="match status" value="1"/>
</dbReference>
<dbReference type="PIRSF" id="PIRSF000350">
    <property type="entry name" value="Mercury_reductase_MerA"/>
    <property type="match status" value="1"/>
</dbReference>
<dbReference type="PRINTS" id="PR00368">
    <property type="entry name" value="FADPNR"/>
</dbReference>
<dbReference type="PRINTS" id="PR00411">
    <property type="entry name" value="PNDRDTASEI"/>
</dbReference>
<dbReference type="SUPFAM" id="SSF51905">
    <property type="entry name" value="FAD/NAD(P)-binding domain"/>
    <property type="match status" value="1"/>
</dbReference>
<dbReference type="SUPFAM" id="SSF55424">
    <property type="entry name" value="FAD/NAD-linked reductases, dimerisation (C-terminal) domain"/>
    <property type="match status" value="1"/>
</dbReference>
<dbReference type="PROSITE" id="PS00076">
    <property type="entry name" value="PYRIDINE_REDOX_1"/>
    <property type="match status" value="1"/>
</dbReference>
<protein>
    <recommendedName>
        <fullName evidence="12">Glutathione reductase</fullName>
        <shortName evidence="12">GR</shortName>
        <shortName evidence="12">GRase</shortName>
        <ecNumber evidence="7 11">1.8.1.7</ecNumber>
    </recommendedName>
</protein>
<name>GSHR_YEAST</name>
<evidence type="ECO:0000250" key="1">
    <source>
        <dbReference type="UniProtKB" id="P00390"/>
    </source>
</evidence>
<evidence type="ECO:0000250" key="2">
    <source>
        <dbReference type="UniProtKB" id="P06715"/>
    </source>
</evidence>
<evidence type="ECO:0000269" key="3">
    <source>
    </source>
</evidence>
<evidence type="ECO:0000269" key="4">
    <source>
    </source>
</evidence>
<evidence type="ECO:0000269" key="5">
    <source>
    </source>
</evidence>
<evidence type="ECO:0000269" key="6">
    <source>
    </source>
</evidence>
<evidence type="ECO:0000269" key="7">
    <source>
    </source>
</evidence>
<evidence type="ECO:0000269" key="8">
    <source>
    </source>
</evidence>
<evidence type="ECO:0000269" key="9">
    <source>
    </source>
</evidence>
<evidence type="ECO:0000269" key="10">
    <source>
    </source>
</evidence>
<evidence type="ECO:0000269" key="11">
    <source>
    </source>
</evidence>
<evidence type="ECO:0000303" key="12">
    <source>
    </source>
</evidence>
<evidence type="ECO:0000305" key="13"/>
<evidence type="ECO:0007744" key="14">
    <source>
        <dbReference type="PDB" id="2HQM"/>
    </source>
</evidence>
<evidence type="ECO:0007744" key="15">
    <source>
    </source>
</evidence>
<evidence type="ECO:0007829" key="16">
    <source>
        <dbReference type="PDB" id="2HQM"/>
    </source>
</evidence>
<proteinExistence type="evidence at protein level"/>
<keyword id="KW-0002">3D-structure</keyword>
<keyword id="KW-0007">Acetylation</keyword>
<keyword id="KW-0024">Alternative initiation</keyword>
<keyword id="KW-0963">Cytoplasm</keyword>
<keyword id="KW-1015">Disulfide bond</keyword>
<keyword id="KW-0274">FAD</keyword>
<keyword id="KW-0285">Flavoprotein</keyword>
<keyword id="KW-0325">Glycoprotein</keyword>
<keyword id="KW-0496">Mitochondrion</keyword>
<keyword id="KW-0521">NADP</keyword>
<keyword id="KW-0539">Nucleus</keyword>
<keyword id="KW-0560">Oxidoreductase</keyword>
<keyword id="KW-0576">Peroxisome</keyword>
<keyword id="KW-0676">Redox-active center</keyword>
<keyword id="KW-1185">Reference proteome</keyword>
<feature type="chain" id="PRO_0000067972" description="Glutathione reductase">
    <location>
        <begin position="1"/>
        <end position="483"/>
    </location>
</feature>
<feature type="active site" description="Proton acceptor" evidence="1">
    <location>
        <position position="472"/>
    </location>
</feature>
<feature type="binding site" evidence="6 14">
    <location>
        <position position="33"/>
    </location>
    <ligand>
        <name>FAD</name>
        <dbReference type="ChEBI" id="CHEBI:57692"/>
    </ligand>
</feature>
<feature type="binding site" evidence="1">
    <location>
        <position position="33"/>
    </location>
    <ligand>
        <name>glutathione</name>
        <dbReference type="ChEBI" id="CHEBI:57925"/>
    </ligand>
</feature>
<feature type="binding site" evidence="6 14">
    <location>
        <position position="34"/>
    </location>
    <ligand>
        <name>FAD</name>
        <dbReference type="ChEBI" id="CHEBI:57692"/>
    </ligand>
</feature>
<feature type="binding site" evidence="1">
    <location>
        <position position="40"/>
    </location>
    <ligand>
        <name>glutathione</name>
        <dbReference type="ChEBI" id="CHEBI:57925"/>
    </ligand>
</feature>
<feature type="binding site" evidence="6 14">
    <location>
        <position position="53"/>
    </location>
    <ligand>
        <name>FAD</name>
        <dbReference type="ChEBI" id="CHEBI:57692"/>
    </ligand>
</feature>
<feature type="binding site" evidence="6 14">
    <location>
        <position position="60"/>
    </location>
    <ligand>
        <name>FAD</name>
        <dbReference type="ChEBI" id="CHEBI:57692"/>
    </ligand>
</feature>
<feature type="binding site" evidence="6 14">
    <location>
        <position position="61"/>
    </location>
    <ligand>
        <name>FAD</name>
        <dbReference type="ChEBI" id="CHEBI:57692"/>
    </ligand>
</feature>
<feature type="binding site" evidence="6 14">
    <location>
        <position position="69"/>
    </location>
    <ligand>
        <name>FAD</name>
        <dbReference type="ChEBI" id="CHEBI:57692"/>
    </ligand>
</feature>
<feature type="binding site" evidence="1">
    <location>
        <position position="123"/>
    </location>
    <ligand>
        <name>glutathione</name>
        <dbReference type="ChEBI" id="CHEBI:57925"/>
    </ligand>
</feature>
<feature type="binding site" evidence="6 14">
    <location>
        <position position="139"/>
    </location>
    <ligand>
        <name>FAD</name>
        <dbReference type="ChEBI" id="CHEBI:57692"/>
    </ligand>
</feature>
<feature type="binding site" evidence="2">
    <location>
        <position position="205"/>
    </location>
    <ligand>
        <name>NADP(+)</name>
        <dbReference type="ChEBI" id="CHEBI:58349"/>
    </ligand>
</feature>
<feature type="binding site" evidence="2">
    <location>
        <position position="208"/>
    </location>
    <ligand>
        <name>NADP(+)</name>
        <dbReference type="ChEBI" id="CHEBI:58349"/>
    </ligand>
</feature>
<feature type="binding site" evidence="2">
    <location>
        <position position="211"/>
    </location>
    <ligand>
        <name>NADP(+)</name>
        <dbReference type="ChEBI" id="CHEBI:58349"/>
    </ligand>
</feature>
<feature type="binding site" evidence="2">
    <location>
        <position position="228"/>
    </location>
    <ligand>
        <name>NADP(+)</name>
        <dbReference type="ChEBI" id="CHEBI:58349"/>
    </ligand>
</feature>
<feature type="binding site" evidence="2">
    <location>
        <position position="234"/>
    </location>
    <ligand>
        <name>NADP(+)</name>
        <dbReference type="ChEBI" id="CHEBI:58349"/>
    </ligand>
</feature>
<feature type="binding site" evidence="6 14">
    <location>
        <position position="243"/>
    </location>
    <ligand>
        <name>glutathione</name>
        <dbReference type="ChEBI" id="CHEBI:57925"/>
    </ligand>
</feature>
<feature type="binding site" evidence="2">
    <location>
        <position position="294"/>
    </location>
    <ligand>
        <name>NADP(+)</name>
        <dbReference type="ChEBI" id="CHEBI:58349"/>
    </ligand>
</feature>
<feature type="binding site" evidence="6 14">
    <location>
        <position position="334"/>
    </location>
    <ligand>
        <name>FAD</name>
        <dbReference type="ChEBI" id="CHEBI:57692"/>
    </ligand>
</feature>
<feature type="binding site" evidence="2">
    <location>
        <position position="340"/>
    </location>
    <ligand>
        <name>NADP(+)</name>
        <dbReference type="ChEBI" id="CHEBI:58349"/>
    </ligand>
</feature>
<feature type="binding site" evidence="6 14">
    <location>
        <position position="342"/>
    </location>
    <ligand>
        <name>FAD</name>
        <dbReference type="ChEBI" id="CHEBI:57692"/>
    </ligand>
</feature>
<feature type="binding site" evidence="1">
    <location>
        <position position="350"/>
    </location>
    <ligand>
        <name>glutathione</name>
        <dbReference type="ChEBI" id="CHEBI:57925"/>
    </ligand>
</feature>
<feature type="binding site" evidence="2">
    <location>
        <position position="375"/>
    </location>
    <ligand>
        <name>NADP(+)</name>
        <dbReference type="ChEBI" id="CHEBI:58349"/>
    </ligand>
</feature>
<feature type="binding site" evidence="6 14">
    <location>
        <position position="425"/>
    </location>
    <ligand>
        <name>glutathione</name>
        <dbReference type="ChEBI" id="CHEBI:57925"/>
    </ligand>
</feature>
<feature type="binding site" evidence="6 14">
    <location>
        <position position="472"/>
    </location>
    <ligand>
        <name>FAD</name>
        <dbReference type="ChEBI" id="CHEBI:57692"/>
    </ligand>
</feature>
<feature type="modified residue" description="N-acetylmethionine" evidence="15">
    <location>
        <position position="1"/>
    </location>
</feature>
<feature type="glycosylation site" description="N-linked (GlcNAc...) asparagine" evidence="6 14">
    <location>
        <position position="278"/>
    </location>
</feature>
<feature type="disulfide bond" description="Redox-active" evidence="6 14">
    <location>
        <begin position="61"/>
        <end position="66"/>
    </location>
</feature>
<feature type="splice variant" id="VSP_058124" description="In isoform 2." evidence="13">
    <location>
        <begin position="1"/>
        <end position="16"/>
    </location>
</feature>
<feature type="sequence conflict" description="In Ref. 4; BAA07109." evidence="13" ref="4">
    <original>Q</original>
    <variation>E</variation>
    <location>
        <position position="315"/>
    </location>
</feature>
<feature type="sequence conflict" description="In Ref. 4; BAA07109." evidence="13" ref="4">
    <original>C</original>
    <variation>G</variation>
    <location>
        <position position="428"/>
    </location>
</feature>
<feature type="strand" evidence="16">
    <location>
        <begin position="23"/>
        <end position="29"/>
    </location>
</feature>
<feature type="helix" evidence="16">
    <location>
        <begin position="33"/>
        <end position="44"/>
    </location>
</feature>
<feature type="strand" evidence="16">
    <location>
        <begin position="49"/>
        <end position="55"/>
    </location>
</feature>
<feature type="helix" evidence="16">
    <location>
        <begin position="59"/>
        <end position="64"/>
    </location>
</feature>
<feature type="helix" evidence="16">
    <location>
        <begin position="66"/>
        <end position="82"/>
    </location>
</feature>
<feature type="turn" evidence="16">
    <location>
        <begin position="83"/>
        <end position="89"/>
    </location>
</feature>
<feature type="helix" evidence="16">
    <location>
        <begin position="98"/>
        <end position="100"/>
    </location>
</feature>
<feature type="helix" evidence="16">
    <location>
        <begin position="105"/>
        <end position="129"/>
    </location>
</feature>
<feature type="strand" evidence="16">
    <location>
        <begin position="132"/>
        <end position="141"/>
    </location>
</feature>
<feature type="strand" evidence="16">
    <location>
        <begin position="147"/>
        <end position="154"/>
    </location>
</feature>
<feature type="strand" evidence="16">
    <location>
        <begin position="157"/>
        <end position="166"/>
    </location>
</feature>
<feature type="strand" evidence="16">
    <location>
        <begin position="170"/>
        <end position="172"/>
    </location>
</feature>
<feature type="helix" evidence="16">
    <location>
        <begin position="181"/>
        <end position="183"/>
    </location>
</feature>
<feature type="helix" evidence="16">
    <location>
        <begin position="187"/>
        <end position="192"/>
    </location>
</feature>
<feature type="strand" evidence="16">
    <location>
        <begin position="198"/>
        <end position="203"/>
    </location>
</feature>
<feature type="helix" evidence="16">
    <location>
        <begin position="207"/>
        <end position="218"/>
    </location>
</feature>
<feature type="strand" evidence="16">
    <location>
        <begin position="222"/>
        <end position="226"/>
    </location>
</feature>
<feature type="strand" evidence="16">
    <location>
        <begin position="228"/>
        <end position="232"/>
    </location>
</feature>
<feature type="helix" evidence="16">
    <location>
        <begin position="238"/>
        <end position="251"/>
    </location>
</feature>
<feature type="strand" evidence="16">
    <location>
        <begin position="254"/>
        <end position="256"/>
    </location>
</feature>
<feature type="strand" evidence="16">
    <location>
        <begin position="261"/>
        <end position="266"/>
    </location>
</feature>
<feature type="strand" evidence="16">
    <location>
        <begin position="273"/>
        <end position="277"/>
    </location>
</feature>
<feature type="strand" evidence="16">
    <location>
        <begin position="282"/>
        <end position="291"/>
    </location>
</feature>
<feature type="strand" evidence="16">
    <location>
        <begin position="295"/>
        <end position="297"/>
    </location>
</feature>
<feature type="helix" evidence="16">
    <location>
        <begin position="303"/>
        <end position="306"/>
    </location>
</feature>
<feature type="strand" evidence="16">
    <location>
        <begin position="329"/>
        <end position="331"/>
    </location>
</feature>
<feature type="helix" evidence="16">
    <location>
        <begin position="333"/>
        <end position="335"/>
    </location>
</feature>
<feature type="helix" evidence="16">
    <location>
        <begin position="342"/>
        <end position="357"/>
    </location>
</feature>
<feature type="helix" evidence="16">
    <location>
        <begin position="360"/>
        <end position="362"/>
    </location>
</feature>
<feature type="strand" evidence="16">
    <location>
        <begin position="374"/>
        <end position="376"/>
    </location>
</feature>
<feature type="strand" evidence="16">
    <location>
        <begin position="382"/>
        <end position="386"/>
    </location>
</feature>
<feature type="helix" evidence="16">
    <location>
        <begin position="389"/>
        <end position="396"/>
    </location>
</feature>
<feature type="helix" evidence="16">
    <location>
        <begin position="398"/>
        <end position="400"/>
    </location>
</feature>
<feature type="strand" evidence="16">
    <location>
        <begin position="401"/>
        <end position="408"/>
    </location>
</feature>
<feature type="helix" evidence="16">
    <location>
        <begin position="411"/>
        <end position="415"/>
    </location>
</feature>
<feature type="strand" evidence="16">
    <location>
        <begin position="422"/>
        <end position="429"/>
    </location>
</feature>
<feature type="turn" evidence="16">
    <location>
        <begin position="430"/>
        <end position="433"/>
    </location>
</feature>
<feature type="strand" evidence="16">
    <location>
        <begin position="434"/>
        <end position="442"/>
    </location>
</feature>
<feature type="helix" evidence="16">
    <location>
        <begin position="445"/>
        <end position="457"/>
    </location>
</feature>
<feature type="helix" evidence="16">
    <location>
        <begin position="462"/>
        <end position="466"/>
    </location>
</feature>
<feature type="helix" evidence="16">
    <location>
        <begin position="476"/>
        <end position="480"/>
    </location>
</feature>
<feature type="initiator methionine" description="Removed" evidence="15">
    <location sequence="P41921-2">
        <position position="1"/>
    </location>
</feature>
<feature type="modified residue" description="N-acetylserine" evidence="15">
    <location sequence="P41921-2">
        <position position="2"/>
    </location>
</feature>
<gene>
    <name evidence="12" type="primary">GLR1</name>
    <name type="ordered locus">YPL091W</name>
    <name type="ORF">LPG17W</name>
</gene>
<accession>P41921</accession>
<accession>D6W3S6</accession>
<reference key="1">
    <citation type="journal article" date="1995" name="Gene">
        <title>Isolation, characterization and overexpression of the yeast gene, GLR1, encoding glutathione reductase.</title>
        <authorList>
            <person name="Collinson L.P."/>
            <person name="Dawes I.W."/>
        </authorList>
    </citation>
    <scope>NUCLEOTIDE SEQUENCE [GENOMIC DNA] OF 17-483</scope>
    <scope>FUNCTION</scope>
    <scope>DISRUPTION PHENOTYPE</scope>
    <scope>CATALYTIC ACTIVITY</scope>
</reference>
<reference key="2">
    <citation type="journal article" date="1997" name="Nature">
        <title>The nucleotide sequence of Saccharomyces cerevisiae chromosome XVI.</title>
        <authorList>
            <person name="Bussey H."/>
            <person name="Storms R.K."/>
            <person name="Ahmed A."/>
            <person name="Albermann K."/>
            <person name="Allen E."/>
            <person name="Ansorge W."/>
            <person name="Araujo R."/>
            <person name="Aparicio A."/>
            <person name="Barrell B.G."/>
            <person name="Badcock K."/>
            <person name="Benes V."/>
            <person name="Botstein D."/>
            <person name="Bowman S."/>
            <person name="Brueckner M."/>
            <person name="Carpenter J."/>
            <person name="Cherry J.M."/>
            <person name="Chung E."/>
            <person name="Churcher C.M."/>
            <person name="Coster F."/>
            <person name="Davis K."/>
            <person name="Davis R.W."/>
            <person name="Dietrich F.S."/>
            <person name="Delius H."/>
            <person name="DiPaolo T."/>
            <person name="Dubois E."/>
            <person name="Duesterhoeft A."/>
            <person name="Duncan M."/>
            <person name="Floeth M."/>
            <person name="Fortin N."/>
            <person name="Friesen J.D."/>
            <person name="Fritz C."/>
            <person name="Goffeau A."/>
            <person name="Hall J."/>
            <person name="Hebling U."/>
            <person name="Heumann K."/>
            <person name="Hilbert H."/>
            <person name="Hillier L.W."/>
            <person name="Hunicke-Smith S."/>
            <person name="Hyman R.W."/>
            <person name="Johnston M."/>
            <person name="Kalman S."/>
            <person name="Kleine K."/>
            <person name="Komp C."/>
            <person name="Kurdi O."/>
            <person name="Lashkari D."/>
            <person name="Lew H."/>
            <person name="Lin A."/>
            <person name="Lin D."/>
            <person name="Louis E.J."/>
            <person name="Marathe R."/>
            <person name="Messenguy F."/>
            <person name="Mewes H.-W."/>
            <person name="Mirtipati S."/>
            <person name="Moestl D."/>
            <person name="Mueller-Auer S."/>
            <person name="Namath A."/>
            <person name="Nentwich U."/>
            <person name="Oefner P."/>
            <person name="Pearson D."/>
            <person name="Petel F.X."/>
            <person name="Pohl T.M."/>
            <person name="Purnelle B."/>
            <person name="Rajandream M.A."/>
            <person name="Rechmann S."/>
            <person name="Rieger M."/>
            <person name="Riles L."/>
            <person name="Roberts D."/>
            <person name="Schaefer M."/>
            <person name="Scharfe M."/>
            <person name="Scherens B."/>
            <person name="Schramm S."/>
            <person name="Schroeder M."/>
            <person name="Sdicu A.-M."/>
            <person name="Tettelin H."/>
            <person name="Urrestarazu L.A."/>
            <person name="Ushinsky S."/>
            <person name="Vierendeels F."/>
            <person name="Vissers S."/>
            <person name="Voss H."/>
            <person name="Walsh S.V."/>
            <person name="Wambutt R."/>
            <person name="Wang Y."/>
            <person name="Wedler E."/>
            <person name="Wedler H."/>
            <person name="Winnett E."/>
            <person name="Zhong W.-W."/>
            <person name="Zollner A."/>
            <person name="Vo D.H."/>
            <person name="Hani J."/>
        </authorList>
    </citation>
    <scope>NUCLEOTIDE SEQUENCE [LARGE SCALE GENOMIC DNA]</scope>
    <source>
        <strain>ATCC 204508 / S288c</strain>
    </source>
</reference>
<reference key="3">
    <citation type="journal article" date="2014" name="G3 (Bethesda)">
        <title>The reference genome sequence of Saccharomyces cerevisiae: Then and now.</title>
        <authorList>
            <person name="Engel S.R."/>
            <person name="Dietrich F.S."/>
            <person name="Fisk D.G."/>
            <person name="Binkley G."/>
            <person name="Balakrishnan R."/>
            <person name="Costanzo M.C."/>
            <person name="Dwight S.S."/>
            <person name="Hitz B.C."/>
            <person name="Karra K."/>
            <person name="Nash R.S."/>
            <person name="Weng S."/>
            <person name="Wong E.D."/>
            <person name="Lloyd P."/>
            <person name="Skrzypek M.S."/>
            <person name="Miyasato S.R."/>
            <person name="Simison M."/>
            <person name="Cherry J.M."/>
        </authorList>
    </citation>
    <scope>GENOME REANNOTATION</scope>
    <source>
        <strain>ATCC 204508 / S288c</strain>
    </source>
</reference>
<reference key="4">
    <citation type="submission" date="1994-08" db="EMBL/GenBank/DDBJ databases">
        <authorList>
            <person name="Aono M."/>
            <person name="Nakajima N."/>
        </authorList>
    </citation>
    <scope>NUCLEOTIDE SEQUENCE OF 20-483</scope>
</reference>
<reference key="5">
    <citation type="journal article" date="2003" name="Nature">
        <title>Global analysis of protein localization in budding yeast.</title>
        <authorList>
            <person name="Huh W.-K."/>
            <person name="Falvo J.V."/>
            <person name="Gerke L.C."/>
            <person name="Carroll A.S."/>
            <person name="Howson R.W."/>
            <person name="Weissman J.S."/>
            <person name="O'Shea E.K."/>
        </authorList>
    </citation>
    <scope>SUBCELLULAR LOCATION [LARGE SCALE ANALYSIS]</scope>
</reference>
<reference key="6">
    <citation type="journal article" date="2003" name="Nature">
        <title>Global analysis of protein expression in yeast.</title>
        <authorList>
            <person name="Ghaemmaghami S."/>
            <person name="Huh W.-K."/>
            <person name="Bower K."/>
            <person name="Howson R.W."/>
            <person name="Belle A."/>
            <person name="Dephoure N."/>
            <person name="O'Shea E.K."/>
            <person name="Weissman J.S."/>
        </authorList>
    </citation>
    <scope>LEVEL OF PROTEIN EXPRESSION [LARGE SCALE ANALYSIS]</scope>
</reference>
<reference key="7">
    <citation type="journal article" date="2006" name="J. Proteome Res.">
        <title>Toward the complete yeast mitochondrial proteome: multidimensional separation techniques for mitochondrial proteomics.</title>
        <authorList>
            <person name="Reinders J."/>
            <person name="Zahedi R.P."/>
            <person name="Pfanner N."/>
            <person name="Meisinger C."/>
            <person name="Sickmann A."/>
        </authorList>
    </citation>
    <scope>SUBCELLULAR LOCATION</scope>
</reference>
<reference key="8">
    <citation type="journal article" date="2008" name="Mol. Cell. Proteomics">
        <title>A multidimensional chromatography technology for in-depth phosphoproteome analysis.</title>
        <authorList>
            <person name="Albuquerque C.P."/>
            <person name="Smolka M.B."/>
            <person name="Payne S.H."/>
            <person name="Bafna V."/>
            <person name="Eng J."/>
            <person name="Zhou H."/>
        </authorList>
    </citation>
    <scope>IDENTIFICATION BY MASS SPECTROMETRY [LARGE SCALE ANALYSIS]</scope>
</reference>
<reference key="9">
    <citation type="journal article" date="2009" name="J. Biol. Chem.">
        <title>Characterization of a novel dithiocarbamate glutathione reductase inhibitor and its use as a tool to modulate intracellular glutathione.</title>
        <authorList>
            <person name="Seefeldt T."/>
            <person name="Zhao Y."/>
            <person name="Chen W."/>
            <person name="Raza A.S."/>
            <person name="Carlson L."/>
            <person name="Herman J."/>
            <person name="Stoebner A."/>
            <person name="Hanson S."/>
            <person name="Foll R."/>
            <person name="Guan X."/>
        </authorList>
    </citation>
    <scope>FUNCTION</scope>
    <scope>CATALYTIC ACTIVITY</scope>
</reference>
<reference key="10">
    <citation type="journal article" date="2012" name="Proc. Natl. Acad. Sci. U.S.A.">
        <title>N-terminal acetylome analyses and functional insights of the N-terminal acetyltransferase NatB.</title>
        <authorList>
            <person name="Van Damme P."/>
            <person name="Lasa M."/>
            <person name="Polevoda B."/>
            <person name="Gazquez C."/>
            <person name="Elosegui-Artola A."/>
            <person name="Kim D.S."/>
            <person name="De Juan-Pardo E."/>
            <person name="Demeyer K."/>
            <person name="Hole K."/>
            <person name="Larrea E."/>
            <person name="Timmerman E."/>
            <person name="Prieto J."/>
            <person name="Arnesen T."/>
            <person name="Sherman F."/>
            <person name="Gevaert K."/>
            <person name="Aldabe R."/>
        </authorList>
    </citation>
    <scope>ACETYLATION [LARGE SCALE ANALYSIS] AT MET-1</scope>
    <scope>ACETYLATION [LARGE SCALE ANALYSIS] AT SER-2 (ISOFORM 2)</scope>
    <scope>CLEAVAGE OF INITIATOR METHIONINE [LARGE SCALE ANALYSIS] (ISOFORM 2)</scope>
    <scope>IDENTIFICATION BY MASS SPECTROMETRY [LARGE SCALE ANALYSIS]</scope>
</reference>
<reference key="11">
    <citation type="journal article" date="2013" name="Nat. Chem. Biol.">
        <title>Multiple glutathione disulfide removal pathways mediate cytosolic redox homeostasis.</title>
        <authorList>
            <person name="Morgan B."/>
            <person name="Ezerina D."/>
            <person name="Amoako T.N."/>
            <person name="Riemer J."/>
            <person name="Seedorf M."/>
            <person name="Dick T.P."/>
        </authorList>
    </citation>
    <scope>FUNCTION</scope>
</reference>
<reference key="12">
    <citation type="journal article" date="2013" name="PLoS ONE">
        <title>N-terminal acetylation by NatC is not a general determinant for substrate subcellular localization in Saccharomyces cerevisiae.</title>
        <authorList>
            <person name="Aksnes H."/>
            <person name="Osberg C."/>
            <person name="Arnesen T."/>
        </authorList>
    </citation>
    <scope>SUBCELLULAR LOCATION</scope>
</reference>
<reference key="13">
    <citation type="journal article" date="2022" name="Mol. Syst. Biol.">
        <title>Systematic multi-level analysis of an organelle proteome reveals new peroxisomal functions.</title>
        <authorList>
            <person name="Yifrach E."/>
            <person name="Holbrook-Smith D."/>
            <person name="Buergi J."/>
            <person name="Othman A."/>
            <person name="Eisenstein M."/>
            <person name="van Roermund C.W."/>
            <person name="Visser W."/>
            <person name="Tirosh A."/>
            <person name="Rudowitz M."/>
            <person name="Bibi C."/>
            <person name="Galor S."/>
            <person name="Weill U."/>
            <person name="Fadel A."/>
            <person name="Peleg Y."/>
            <person name="Erdmann R."/>
            <person name="Waterham H.R."/>
            <person name="Wanders R.J.A."/>
            <person name="Wilmanns M."/>
            <person name="Zamboni N."/>
            <person name="Schuldiner M."/>
            <person name="Zalckvar E."/>
        </authorList>
    </citation>
    <scope>SUBCELLULAR LOCATION</scope>
</reference>
<reference evidence="14" key="14">
    <citation type="journal article" date="2007" name="Proteins">
        <title>Crystal structure of glutathione reductase Glr1 from the yeast Saccharomyces cerevisiae.</title>
        <authorList>
            <person name="Yu J."/>
            <person name="Zhou C.Z."/>
        </authorList>
    </citation>
    <scope>X-RAY CRYSTALLOGRAPHY (2.40 ANGSTROMS) OF 16-483 IN COMPLEX WITH FAD</scope>
    <scope>GLYCOSYLATION AT ASN-278</scope>
    <scope>SUBUNIT</scope>
</reference>